<dbReference type="EMBL" id="M24212">
    <property type="protein sequence ID" value="AAA45887.1"/>
    <property type="molecule type" value="mRNA"/>
</dbReference>
<dbReference type="EMBL" id="Y00835">
    <property type="protein sequence ID" value="CAA68762.1"/>
    <property type="molecule type" value="mRNA"/>
</dbReference>
<dbReference type="EMBL" id="V01555">
    <property type="status" value="NOT_ANNOTATED_CDS"/>
    <property type="molecule type" value="Genomic_DNA"/>
</dbReference>
<dbReference type="EMBL" id="AJ507799">
    <property type="protein sequence ID" value="CAD53383.1"/>
    <property type="status" value="ALT_SEQ"/>
    <property type="molecule type" value="Genomic_DNA"/>
</dbReference>
<dbReference type="EMBL" id="AJ507799">
    <property type="protein sequence ID" value="CAD53382.1"/>
    <property type="status" value="ALT_SEQ"/>
    <property type="molecule type" value="Genomic_DNA"/>
</dbReference>
<dbReference type="PIR" id="A30178">
    <property type="entry name" value="WMBELM"/>
</dbReference>
<dbReference type="PDB" id="1UXS">
    <property type="method" value="X-ray"/>
    <property type="resolution" value="1.55 A"/>
    <property type="chains" value="C=236-244"/>
</dbReference>
<dbReference type="PDB" id="1UXW">
    <property type="method" value="X-ray"/>
    <property type="resolution" value="1.71 A"/>
    <property type="chains" value="C=236-244"/>
</dbReference>
<dbReference type="PDB" id="2JO9">
    <property type="method" value="NMR"/>
    <property type="chains" value="B=54-62"/>
</dbReference>
<dbReference type="PDB" id="3BVN">
    <property type="method" value="X-ray"/>
    <property type="resolution" value="2.55 A"/>
    <property type="chains" value="C/F=236-244"/>
</dbReference>
<dbReference type="PDB" id="3REW">
    <property type="method" value="X-ray"/>
    <property type="resolution" value="1.90 A"/>
    <property type="chains" value="C/F=426-434"/>
</dbReference>
<dbReference type="PDB" id="5GRD">
    <property type="method" value="X-ray"/>
    <property type="resolution" value="1.80 A"/>
    <property type="chains" value="C=340-349"/>
</dbReference>
<dbReference type="PDB" id="5GSD">
    <property type="method" value="X-ray"/>
    <property type="resolution" value="2.30 A"/>
    <property type="chains" value="C=343-349"/>
</dbReference>
<dbReference type="PDBsum" id="1UXS"/>
<dbReference type="PDBsum" id="1UXW"/>
<dbReference type="PDBsum" id="2JO9"/>
<dbReference type="PDBsum" id="3BVN"/>
<dbReference type="PDBsum" id="3REW"/>
<dbReference type="PDBsum" id="5GRD"/>
<dbReference type="PDBsum" id="5GSD"/>
<dbReference type="BMRB" id="P13285"/>
<dbReference type="SMR" id="P13285"/>
<dbReference type="BioGRID" id="3509104">
    <property type="interactions" value="3"/>
</dbReference>
<dbReference type="ELM" id="P13285"/>
<dbReference type="IntAct" id="P13285">
    <property type="interactions" value="82"/>
</dbReference>
<dbReference type="MINT" id="P13285"/>
<dbReference type="TCDB" id="9.B.387.2.1">
    <property type="family name" value="the viral latent membrane protein (vlmp) family"/>
</dbReference>
<dbReference type="SwissPalm" id="P13285"/>
<dbReference type="ABCD" id="P13285">
    <property type="antibodies" value="7 sequenced antibodies"/>
</dbReference>
<dbReference type="DNASU" id="3783751"/>
<dbReference type="DNASU" id="3783760"/>
<dbReference type="KEGG" id="vg:3783751"/>
<dbReference type="KEGG" id="vg:3783760"/>
<dbReference type="SIGNOR" id="P13285"/>
<dbReference type="EvolutionaryTrace" id="P13285"/>
<dbReference type="Proteomes" id="UP000153037">
    <property type="component" value="Segment"/>
</dbReference>
<dbReference type="GO" id="GO:0033645">
    <property type="term" value="C:host cell endomembrane system"/>
    <property type="evidence" value="ECO:0007669"/>
    <property type="project" value="UniProtKB-SubCell"/>
</dbReference>
<dbReference type="GO" id="GO:0044220">
    <property type="term" value="C:host cell perinuclear region of cytoplasm"/>
    <property type="evidence" value="ECO:0007669"/>
    <property type="project" value="UniProtKB-SubCell"/>
</dbReference>
<dbReference type="GO" id="GO:0020002">
    <property type="term" value="C:host cell plasma membrane"/>
    <property type="evidence" value="ECO:0007669"/>
    <property type="project" value="UniProtKB-SubCell"/>
</dbReference>
<dbReference type="GO" id="GO:0016020">
    <property type="term" value="C:membrane"/>
    <property type="evidence" value="ECO:0007669"/>
    <property type="project" value="UniProtKB-KW"/>
</dbReference>
<dbReference type="GO" id="GO:0039648">
    <property type="term" value="P:symbiont-mediated perturbation of host ubiquitin-like protein modification"/>
    <property type="evidence" value="ECO:0007669"/>
    <property type="project" value="UniProtKB-KW"/>
</dbReference>
<dbReference type="GO" id="GO:0019042">
    <property type="term" value="P:viral latency"/>
    <property type="evidence" value="ECO:0007669"/>
    <property type="project" value="InterPro"/>
</dbReference>
<dbReference type="InterPro" id="IPR010881">
    <property type="entry name" value="Herpes_LMP2"/>
</dbReference>
<dbReference type="Pfam" id="PF07415">
    <property type="entry name" value="Herpes_LMP2"/>
    <property type="match status" value="1"/>
</dbReference>
<accession>P13285</accession>
<accession>Q777H4</accession>
<accession>Q8AZK9</accession>
<keyword id="KW-0002">3D-structure</keyword>
<keyword id="KW-0025">Alternative splicing</keyword>
<keyword id="KW-1032">Host cell membrane</keyword>
<keyword id="KW-1035">Host cytoplasm</keyword>
<keyword id="KW-1043">Host membrane</keyword>
<keyword id="KW-0945">Host-virus interaction</keyword>
<keyword id="KW-0472">Membrane</keyword>
<keyword id="KW-1123">Modulation of host E3 ubiquitin ligases by virus</keyword>
<keyword id="KW-1130">Modulation of host ubiquitin pathway by virus</keyword>
<keyword id="KW-0597">Phosphoprotein</keyword>
<keyword id="KW-1185">Reference proteome</keyword>
<keyword id="KW-0812">Transmembrane</keyword>
<keyword id="KW-1133">Transmembrane helix</keyword>
<keyword id="KW-0832">Ubl conjugation</keyword>
<reference key="1">
    <citation type="journal article" date="1988" name="EMBO J.">
        <title>A spliced Epstein-Barr virus gene expressed in immortalized lymphocytes is created by circularization of the linear viral genome.</title>
        <authorList>
            <person name="Laux G."/>
            <person name="Perricaudet M."/>
            <person name="Farrell P.J."/>
        </authorList>
    </citation>
    <scope>NUCLEOTIDE SEQUENCE [MRNA]</scope>
</reference>
<reference key="2">
    <citation type="journal article" date="1989" name="J. Virol.">
        <title>Two related Epstein-Barr virus membrane proteins are encoded by separate genes.</title>
        <authorList>
            <person name="Sample J."/>
            <person name="Liebowitz D."/>
            <person name="Kieff E."/>
        </authorList>
    </citation>
    <scope>NUCLEOTIDE SEQUENCE [MRNA] (ISOFORMS LMP2A AND LMP2B)</scope>
</reference>
<reference key="3">
    <citation type="journal article" date="1984" name="Nature">
        <title>DNA sequence and expression of the B95-8 Epstein-Barr virus genome.</title>
        <authorList>
            <person name="Baer R."/>
            <person name="Bankier A.T."/>
            <person name="Biggin M.D."/>
            <person name="Deininger P.L."/>
            <person name="Farrell P.J."/>
            <person name="Gibson T.J."/>
            <person name="Hatfull G."/>
            <person name="Hudson G.S."/>
            <person name="Satchwell S.C."/>
            <person name="Seguin C."/>
            <person name="Tuffnell P.S."/>
            <person name="Barrell B.G."/>
        </authorList>
    </citation>
    <scope>NUCLEOTIDE SEQUENCE [LARGE SCALE GENOMIC DNA] (ISOFORM LMP2A)</scope>
</reference>
<reference key="4">
    <citation type="journal article" date="2003" name="Virology">
        <title>Updated Epstein-Barr virus (EBV) DNA sequence and analysis of a promoter for the BART (CST, BARF0) RNAs of EBV.</title>
        <authorList>
            <person name="de Jesus O."/>
            <person name="Smith P.R."/>
            <person name="Spender L.C."/>
            <person name="Elgueta Karstegl C."/>
            <person name="Niller H.H."/>
            <person name="Huang D."/>
            <person name="Farrell P.J."/>
        </authorList>
    </citation>
    <scope>GENOME REANNOTATION</scope>
</reference>
<reference key="5">
    <citation type="journal article" date="1991" name="J. Virol.">
        <title>An Epstein-Barr virus protein associated with cell growth transformation interacts with a tyrosine kinase.</title>
        <authorList>
            <person name="Longnecker R."/>
            <person name="Druker B."/>
            <person name="Roberts T.M."/>
            <person name="Kieff E."/>
        </authorList>
    </citation>
    <scope>PHOSPHORYLATION (ISOFORM LMP2A)</scope>
</reference>
<reference key="6">
    <citation type="journal article" date="1994" name="Proc. Natl. Acad. Sci. U.S.A.">
        <title>An integral membrane protein (LMP2) blocks reactivation of Epstein-Barr virus from latency following surface immunoglobulin crosslinking.</title>
        <authorList>
            <person name="Miller C.L."/>
            <person name="Lee J.H."/>
            <person name="Kieff E."/>
            <person name="Longnecker R."/>
        </authorList>
    </citation>
    <scope>FUNCTION</scope>
</reference>
<reference key="7">
    <citation type="journal article" date="1995" name="Immunity">
        <title>Integral membrane protein 2 of Epstein-Barr virus regulates reactivation from latency through dominant negative effects on protein-tyrosine kinases.</title>
        <authorList>
            <person name="Miller C.L."/>
            <person name="Burkhardt A.L."/>
            <person name="Lee J.H."/>
            <person name="Stealey B."/>
            <person name="Longnecker R."/>
            <person name="Bolen J.B."/>
            <person name="Kieff E."/>
        </authorList>
    </citation>
    <scope>INTERACTION WITH HUMAN SYK AND LYN (ISOFORM LMP2A)</scope>
</reference>
<reference key="8">
    <citation type="journal article" date="1998" name="J. Virol.">
        <title>Tyrosine 112 of latent membrane protein 2A is essential for protein tyrosine kinase loading and regulation of Epstein-Barr virus latency.</title>
        <authorList>
            <person name="Fruehling S."/>
            <person name="Swart R."/>
            <person name="Dolwick K.M."/>
            <person name="Kremmer E."/>
            <person name="Longnecker R."/>
        </authorList>
    </citation>
    <scope>MUTAGENESIS OF TYR-74; TYR-85 AND TYR-112</scope>
</reference>
<reference key="9">
    <citation type="journal article" date="1998" name="Immunity">
        <title>Epstein-Barr virus LMP2A drives B cell development and survival in the absence of normal B cell receptor signals.</title>
        <authorList>
            <person name="Caldwell R.G."/>
            <person name="Wilson J.B."/>
            <person name="Anderson S.J."/>
            <person name="Longnecker R."/>
        </authorList>
    </citation>
    <scope>FUNCTION</scope>
</reference>
<reference key="10">
    <citation type="journal article" date="2000" name="Mol. Cell. Biol.">
        <title>Latent membrane protein 2A of Epstein-Barr virus binds WW domain E3 protein-ubiquitin ligases that ubiquitinate B-cell tyrosine kinases.</title>
        <authorList>
            <person name="Winberg G."/>
            <person name="Matskova L."/>
            <person name="Chen F."/>
            <person name="Plant P."/>
            <person name="Rotin D."/>
            <person name="Gish G."/>
            <person name="Ingham R."/>
            <person name="Ernberg I."/>
            <person name="Pawson T."/>
        </authorList>
    </citation>
    <scope>INTERACTION WITH HUMAN ITCH AND NEDD4L (ISOFORM LMP2A)</scope>
</reference>
<reference key="11">
    <citation type="journal article" date="2001" name="Immunity">
        <title>Epstein-Barr virus coopts lipid rafts to block the signaling and antigen transport functions of the BCR.</title>
        <authorList>
            <person name="Dykstra M.L."/>
            <person name="Longnecker R."/>
            <person name="Pierce S.K."/>
        </authorList>
    </citation>
    <scope>SUBCELLULAR LOCATION</scope>
</reference>
<reference key="12">
    <citation type="journal article" date="2002" name="J. Gen. Virol.">
        <title>Epstein-Barr virus latent membrane protein 2B (LMP2B) co-localizes with LMP2A in perinuclear regions in transiently transfected cells.</title>
        <authorList>
            <person name="Lynch D.T."/>
            <person name="Zimmerman J.S."/>
            <person name="Rowe D.T."/>
        </authorList>
    </citation>
    <scope>SUBCELLULAR LOCATION</scope>
</reference>
<reference key="13">
    <citation type="journal article" date="2002" name="Virology">
        <title>Lysine-independent ubiquitination of Epstein-Barr virus LMP2A.</title>
        <authorList>
            <person name="Ikeda M."/>
            <person name="Ikeda A."/>
            <person name="Longnecker R."/>
        </authorList>
    </citation>
    <scope>UBIQUITINATION</scope>
</reference>
<reference key="14">
    <citation type="journal article" date="2005" name="J. Biol. Chem.">
        <title>Allele-dependent similarity between viral and self-peptide presentation by HLA-B27 subtypes.</title>
        <authorList>
            <person name="Fiorillo M.T."/>
            <person name="Ruckert C."/>
            <person name="Hulsmeyer M."/>
            <person name="Sorrentino R."/>
            <person name="Saenger W."/>
            <person name="Ziegler A."/>
            <person name="Uchanska-Ziegler B."/>
        </authorList>
    </citation>
    <scope>X-RAY CRYSTALLOGRAPHY (1.55 ANGSTROMS) OF 236-244</scope>
</reference>
<sequence length="497" mass="53011">MGSLEMVPMGAGPPSPGGDPDGYDGGNNSQYPSASGSSGNTPTPPNDEERESNEEPPPPYEDPYWGNGDRHSDYQPLGTQDQSLYLGLQHDGNDGLPPPPYSPRDDSSQHIYEEAGRGSMNPVCLPVIVAPYLFWLAAIAASCFTASVSTVVTATGLALSLLLLAAVASSYAAAQRKLLTPVTVLTAVVTFFAICLTWRIEDPPFNSLLFALLAAAGGLQGIYVLVMLVLLILAYRRRWRRLTVCGGIMFLACVLVLIVDAVLQLSPLLGAVTVVSMTLLLLAFVLWLSSPGGLGTLGAALLTLAAALALLASLILGTLNLTTMFLLMLLWTLVVLLICSSCSSCPLSKILLARLFLYALALLLLASALIAGGSILQTNFKSLSSTEFIPNLFCMLLLIVAGILFILAILTEWGSGNRTYGPVFMCLGGLLTMVAGAVWLTVMSNTLLSAWILTAGFLIFLIGFALFGVIRCCRYCCYYCLTLESEERPPTPYRNTV</sequence>
<feature type="chain" id="PRO_0000116280" description="Latent membrane protein 2">
    <location>
        <begin position="1"/>
        <end position="497"/>
    </location>
</feature>
<feature type="topological domain" description="Cytoplasmic" evidence="2">
    <location>
        <begin position="1"/>
        <end position="123"/>
    </location>
</feature>
<feature type="transmembrane region" description="Helical" evidence="2">
    <location>
        <begin position="124"/>
        <end position="144"/>
    </location>
</feature>
<feature type="topological domain" description="Extracellular" evidence="2">
    <location>
        <begin position="145"/>
        <end position="147"/>
    </location>
</feature>
<feature type="transmembrane region" description="Helical" evidence="2">
    <location>
        <begin position="148"/>
        <end position="168"/>
    </location>
</feature>
<feature type="topological domain" description="Cytoplasmic" evidence="2">
    <location>
        <begin position="169"/>
        <end position="177"/>
    </location>
</feature>
<feature type="transmembrane region" description="Helical" evidence="2">
    <location>
        <begin position="178"/>
        <end position="198"/>
    </location>
</feature>
<feature type="topological domain" description="Extracellular" evidence="2">
    <location>
        <begin position="199"/>
        <end position="211"/>
    </location>
</feature>
<feature type="transmembrane region" description="Helical" evidence="2">
    <location>
        <begin position="212"/>
        <end position="232"/>
    </location>
</feature>
<feature type="topological domain" description="Cytoplasmic" evidence="2">
    <location>
        <begin position="233"/>
        <end position="241"/>
    </location>
</feature>
<feature type="transmembrane region" description="Helical" evidence="2">
    <location>
        <begin position="242"/>
        <end position="262"/>
    </location>
</feature>
<feature type="topological domain" description="Extracellular" evidence="2">
    <location>
        <begin position="263"/>
        <end position="267"/>
    </location>
</feature>
<feature type="transmembrane region" description="Helical" evidence="2">
    <location>
        <begin position="268"/>
        <end position="288"/>
    </location>
</feature>
<feature type="topological domain" description="Cytoplasmic" evidence="2">
    <location>
        <begin position="289"/>
        <end position="296"/>
    </location>
</feature>
<feature type="transmembrane region" description="Helical" evidence="2">
    <location>
        <begin position="297"/>
        <end position="317"/>
    </location>
</feature>
<feature type="topological domain" description="Extracellular" evidence="2">
    <location>
        <position position="318"/>
    </location>
</feature>
<feature type="transmembrane region" description="Helical" evidence="2">
    <location>
        <begin position="319"/>
        <end position="339"/>
    </location>
</feature>
<feature type="topological domain" description="Cytoplasmic" evidence="2">
    <location>
        <begin position="340"/>
        <end position="354"/>
    </location>
</feature>
<feature type="transmembrane region" description="Helical" evidence="2">
    <location>
        <begin position="355"/>
        <end position="375"/>
    </location>
</feature>
<feature type="topological domain" description="Extracellular" evidence="2">
    <location>
        <begin position="376"/>
        <end position="388"/>
    </location>
</feature>
<feature type="transmembrane region" description="Helical" evidence="2">
    <location>
        <begin position="389"/>
        <end position="409"/>
    </location>
</feature>
<feature type="topological domain" description="Cytoplasmic" evidence="2">
    <location>
        <begin position="410"/>
        <end position="422"/>
    </location>
</feature>
<feature type="transmembrane region" description="Helical" evidence="2">
    <location>
        <begin position="423"/>
        <end position="443"/>
    </location>
</feature>
<feature type="topological domain" description="Extracellular" evidence="2">
    <location>
        <begin position="444"/>
        <end position="449"/>
    </location>
</feature>
<feature type="transmembrane region" description="Helical" evidence="2">
    <location>
        <begin position="450"/>
        <end position="470"/>
    </location>
</feature>
<feature type="topological domain" description="Cytoplasmic" evidence="2">
    <location>
        <begin position="471"/>
        <end position="497"/>
    </location>
</feature>
<feature type="region of interest" description="Disordered" evidence="3">
    <location>
        <begin position="1"/>
        <end position="108"/>
    </location>
</feature>
<feature type="short sequence motif" description="PPxY motif">
    <location>
        <begin position="97"/>
        <end position="101"/>
    </location>
</feature>
<feature type="compositionally biased region" description="Polar residues" evidence="3">
    <location>
        <begin position="27"/>
        <end position="41"/>
    </location>
</feature>
<feature type="modified residue" description="Phosphotyrosine; by host" evidence="2">
    <location>
        <position position="112"/>
    </location>
</feature>
<feature type="splice variant" id="VSP_016139" description="In isoform LMP2B." evidence="11">
    <location>
        <begin position="1"/>
        <end position="119"/>
    </location>
</feature>
<feature type="mutagenesis site" description="Loss of interaction with human SYK." evidence="10">
    <original>Y</original>
    <variation>F</variation>
    <location>
        <position position="74"/>
    </location>
</feature>
<feature type="mutagenesis site" description="Loss of interaction with human SYK." evidence="10">
    <original>Y</original>
    <variation>F</variation>
    <location>
        <position position="85"/>
    </location>
</feature>
<feature type="mutagenesis site" description="Complete loss of phosphorylation." evidence="10">
    <original>Y</original>
    <variation>F</variation>
    <location>
        <position position="112"/>
    </location>
</feature>
<name>LMP2_EBVB9</name>
<organism>
    <name type="scientific">Epstein-Barr virus (strain B95-8)</name>
    <name type="common">HHV-4</name>
    <name type="synonym">Human herpesvirus 4</name>
    <dbReference type="NCBI Taxonomy" id="10377"/>
    <lineage>
        <taxon>Viruses</taxon>
        <taxon>Duplodnaviria</taxon>
        <taxon>Heunggongvirae</taxon>
        <taxon>Peploviricota</taxon>
        <taxon>Herviviricetes</taxon>
        <taxon>Herpesvirales</taxon>
        <taxon>Orthoherpesviridae</taxon>
        <taxon>Gammaherpesvirinae</taxon>
        <taxon>Lymphocryptovirus</taxon>
        <taxon>Lymphocryptovirus humangamma4</taxon>
        <taxon>Epstein-Barr virus (strain GD1)</taxon>
    </lineage>
</organism>
<organismHost>
    <name type="scientific">Homo sapiens</name>
    <name type="common">Human</name>
    <dbReference type="NCBI Taxonomy" id="9606"/>
</organismHost>
<evidence type="ECO:0000250" key="1"/>
<evidence type="ECO:0000255" key="2"/>
<evidence type="ECO:0000256" key="3">
    <source>
        <dbReference type="SAM" id="MobiDB-lite"/>
    </source>
</evidence>
<evidence type="ECO:0000269" key="4">
    <source>
    </source>
</evidence>
<evidence type="ECO:0000269" key="5">
    <source>
    </source>
</evidence>
<evidence type="ECO:0000269" key="6">
    <source>
    </source>
</evidence>
<evidence type="ECO:0000269" key="7">
    <source>
    </source>
</evidence>
<evidence type="ECO:0000269" key="8">
    <source>
    </source>
</evidence>
<evidence type="ECO:0000269" key="9">
    <source>
    </source>
</evidence>
<evidence type="ECO:0000269" key="10">
    <source>
    </source>
</evidence>
<evidence type="ECO:0000303" key="11">
    <source>
    </source>
</evidence>
<evidence type="ECO:0000305" key="12"/>
<proteinExistence type="evidence at protein level"/>
<comment type="function">
    <molecule>Isoform LMP2A</molecule>
    <text evidence="1">Maintains EBV latent infection of B-lymphocyte, by preventing lytic reactivation of the virus in response to surface immunoglobulin (sIg) cross-linking. Acts like a dominant negative inhibitor of the sIg-associated protein tyrosine kinases, LYN and SYK. Also blocks translocation of the B-cell antigen receptor (BCR) into lipid rafts, preventing the subsequent signaling and accelerated internalization of the BCR upon BCR cross-linking. Serves as a molecular scaffold to recruit SYK, LYN and E3 protein-ubiquitin ligases, such as ITCH and NEDD4L, leading to ubiquitination and potential degradation of both tyrosines kinases. Possesses a constitutive signaling activity in non-transformed cells, inducing bypass of normal B lymphocyte developmental checkpoints allowing immunoglobulin-negative cells to colonize peripheral lymphoid organs (By similarity).</text>
</comment>
<comment type="function">
    <molecule>Isoform LMP2B</molecule>
    <text evidence="1">May be a negative regulator of isoform LMP2A.</text>
</comment>
<comment type="subunit">
    <molecule>Isoform LMP2A</molecule>
    <text evidence="4 9">The cytoplasmic N-terminal domain interacts with human SRC family protein tyrosine kinases SYK and LYN. Binds human ITCH, WWP2 and NEDD4L.</text>
</comment>
<comment type="interaction">
    <interactant intactId="EBI-7181113">
        <id>P13285</id>
    </interactant>
    <interactant intactId="EBI-1564678">
        <id>Q96J02</id>
        <label>ITCH</label>
    </interactant>
    <organismsDiffer>true</organismsDiffer>
    <experiments>3</experiments>
</comment>
<comment type="subcellular location">
    <molecule>Isoform LMP2A</molecule>
    <subcellularLocation>
        <location evidence="5 6">Host cell membrane</location>
        <topology evidence="5 6">Multi-pass membrane protein</topology>
    </subcellularLocation>
    <text evidence="5">Isoform LMP2A is localized in plasma membrane lipid rafts.</text>
</comment>
<comment type="subcellular location">
    <molecule>Isoform LMP2B</molecule>
    <subcellularLocation>
        <location evidence="6">Host endomembrane system</location>
        <topology evidence="6">Multi-pass membrane protein</topology>
    </subcellularLocation>
    <subcellularLocation>
        <location evidence="6">Host cytoplasm</location>
        <location evidence="6">Host perinuclear region</location>
    </subcellularLocation>
    <text evidence="6">Isoform LMP2B localizes to perinuclear regions.</text>
</comment>
<comment type="alternative products">
    <event type="alternative splicing"/>
    <isoform>
        <id>P13285-1</id>
        <name>LMP2A</name>
        <name>TP1</name>
        <sequence type="displayed"/>
    </isoform>
    <isoform>
        <id>P13285-2</id>
        <name>LMP2B</name>
        <name>TP2</name>
        <sequence type="described" ref="VSP_016139"/>
    </isoform>
</comment>
<comment type="PTM">
    <molecule>Isoform LMP2A</molecule>
    <text evidence="8">Phosphorylated on cytoplasmic N-terminal tyrosine residues, possibly by human LYN.</text>
</comment>
<comment type="PTM">
    <text evidence="7">Can be ubiquitinated by human ITCH and WWP2 on the N-terminus in a lysine-independent manner.</text>
</comment>
<comment type="miscellaneous">
    <text>In healthy individuals, EBV typically establishes a persistent latent infection in which the virus can be detected in resting, nonproliferating peripheral B-lymphocytes. These latently infected cells express only 2 virally encoded genes, LMP2A and EBNA1.</text>
</comment>
<comment type="similarity">
    <text evidence="12">Belongs to the herpesviridae LMP-2 family.</text>
</comment>
<gene>
    <name type="primary">LMP2</name>
</gene>
<protein>
    <recommendedName>
        <fullName>Latent membrane protein 2</fullName>
    </recommendedName>
    <alternativeName>
        <fullName>Terminal protein</fullName>
    </alternativeName>
</protein>